<dbReference type="EMBL" id="AF306533">
    <property type="protein sequence ID" value="AAG30924.1"/>
    <property type="molecule type" value="mRNA"/>
</dbReference>
<dbReference type="SMR" id="Q9DEZ9"/>
<dbReference type="GO" id="GO:0030424">
    <property type="term" value="C:axon"/>
    <property type="evidence" value="ECO:0007669"/>
    <property type="project" value="TreeGrafter"/>
</dbReference>
<dbReference type="GO" id="GO:0030425">
    <property type="term" value="C:dendrite"/>
    <property type="evidence" value="ECO:0007669"/>
    <property type="project" value="TreeGrafter"/>
</dbReference>
<dbReference type="GO" id="GO:0005615">
    <property type="term" value="C:extracellular space"/>
    <property type="evidence" value="ECO:0007669"/>
    <property type="project" value="TreeGrafter"/>
</dbReference>
<dbReference type="GO" id="GO:0008021">
    <property type="term" value="C:synaptic vesicle"/>
    <property type="evidence" value="ECO:0007669"/>
    <property type="project" value="TreeGrafter"/>
</dbReference>
<dbReference type="GO" id="GO:0008083">
    <property type="term" value="F:growth factor activity"/>
    <property type="evidence" value="ECO:0007669"/>
    <property type="project" value="UniProtKB-KW"/>
</dbReference>
<dbReference type="GO" id="GO:0008289">
    <property type="term" value="F:lipid binding"/>
    <property type="evidence" value="ECO:0007669"/>
    <property type="project" value="UniProtKB-KW"/>
</dbReference>
<dbReference type="GO" id="GO:0008191">
    <property type="term" value="F:metalloendopeptidase inhibitor activity"/>
    <property type="evidence" value="ECO:0000250"/>
    <property type="project" value="UniProtKB"/>
</dbReference>
<dbReference type="GO" id="GO:0005163">
    <property type="term" value="F:nerve growth factor receptor binding"/>
    <property type="evidence" value="ECO:0007669"/>
    <property type="project" value="TreeGrafter"/>
</dbReference>
<dbReference type="GO" id="GO:0090729">
    <property type="term" value="F:toxin activity"/>
    <property type="evidence" value="ECO:0007669"/>
    <property type="project" value="UniProtKB-KW"/>
</dbReference>
<dbReference type="GO" id="GO:0007169">
    <property type="term" value="P:cell surface receptor protein tyrosine kinase signaling pathway"/>
    <property type="evidence" value="ECO:0007669"/>
    <property type="project" value="TreeGrafter"/>
</dbReference>
<dbReference type="GO" id="GO:0050804">
    <property type="term" value="P:modulation of chemical synaptic transmission"/>
    <property type="evidence" value="ECO:0007669"/>
    <property type="project" value="TreeGrafter"/>
</dbReference>
<dbReference type="GO" id="GO:0043524">
    <property type="term" value="P:negative regulation of neuron apoptotic process"/>
    <property type="evidence" value="ECO:0007669"/>
    <property type="project" value="TreeGrafter"/>
</dbReference>
<dbReference type="GO" id="GO:0021675">
    <property type="term" value="P:nerve development"/>
    <property type="evidence" value="ECO:0007669"/>
    <property type="project" value="TreeGrafter"/>
</dbReference>
<dbReference type="GO" id="GO:0038180">
    <property type="term" value="P:nerve growth factor signaling pathway"/>
    <property type="evidence" value="ECO:0007669"/>
    <property type="project" value="TreeGrafter"/>
</dbReference>
<dbReference type="GO" id="GO:0048812">
    <property type="term" value="P:neuron projection morphogenesis"/>
    <property type="evidence" value="ECO:0007669"/>
    <property type="project" value="TreeGrafter"/>
</dbReference>
<dbReference type="FunFam" id="2.10.90.10:FF:000002">
    <property type="entry name" value="Brain-derived neurotrophic factor"/>
    <property type="match status" value="1"/>
</dbReference>
<dbReference type="Gene3D" id="2.10.90.10">
    <property type="entry name" value="Cystine-knot cytokines"/>
    <property type="match status" value="1"/>
</dbReference>
<dbReference type="InterPro" id="IPR029034">
    <property type="entry name" value="Cystine-knot_cytokine"/>
</dbReference>
<dbReference type="InterPro" id="IPR020408">
    <property type="entry name" value="Nerve_growth_factor-like"/>
</dbReference>
<dbReference type="InterPro" id="IPR002072">
    <property type="entry name" value="Nerve_growth_factor-rel"/>
</dbReference>
<dbReference type="InterPro" id="IPR020425">
    <property type="entry name" value="Nerve_growth_factor_bsu"/>
</dbReference>
<dbReference type="InterPro" id="IPR019846">
    <property type="entry name" value="Nerve_growth_factor_CS"/>
</dbReference>
<dbReference type="InterPro" id="IPR020433">
    <property type="entry name" value="Venom_nerve_growth_factor"/>
</dbReference>
<dbReference type="PANTHER" id="PTHR11589:SF10">
    <property type="entry name" value="BETA-NERVE GROWTH FACTOR"/>
    <property type="match status" value="1"/>
</dbReference>
<dbReference type="PANTHER" id="PTHR11589">
    <property type="entry name" value="NERVE GROWTH FACTOR NGF -RELATED"/>
    <property type="match status" value="1"/>
</dbReference>
<dbReference type="Pfam" id="PF00243">
    <property type="entry name" value="NGF"/>
    <property type="match status" value="1"/>
</dbReference>
<dbReference type="PIRSF" id="PIRSF001789">
    <property type="entry name" value="NGF"/>
    <property type="match status" value="1"/>
</dbReference>
<dbReference type="PRINTS" id="PR00268">
    <property type="entry name" value="NGF"/>
</dbReference>
<dbReference type="PRINTS" id="PR01913">
    <property type="entry name" value="NGFBETA"/>
</dbReference>
<dbReference type="PRINTS" id="PR01917">
    <property type="entry name" value="VENOMNGF"/>
</dbReference>
<dbReference type="SMART" id="SM00140">
    <property type="entry name" value="NGF"/>
    <property type="match status" value="1"/>
</dbReference>
<dbReference type="SUPFAM" id="SSF57501">
    <property type="entry name" value="Cystine-knot cytokines"/>
    <property type="match status" value="1"/>
</dbReference>
<dbReference type="PROSITE" id="PS00248">
    <property type="entry name" value="NGF_1"/>
    <property type="match status" value="1"/>
</dbReference>
<dbReference type="PROSITE" id="PS50270">
    <property type="entry name" value="NGF_2"/>
    <property type="match status" value="1"/>
</dbReference>
<comment type="function">
    <text evidence="2 3">Nerve growth factor is important for the development and maintenance of the sympathetic and sensory nervous systems. It stimulates division and differentiation of sympathetic and embryonic sensory neurons as well as basal forebrain cholinergic neurons in the brain. Its relevance in the snake venom is not clear. However, it has been shown to inhibit metalloproteinase-dependent proteolysis of platelet glycoprotein Ib alpha, suggesting a metalloproteinase inhibition to prevent metalloprotease autodigestion and/or protection against prey proteases (By similarity). Binds a lipid between the two protein chains in the homodimer. The lipid-bound form promotes histamine relase from mouse mast cells, contrary to the lipid-free form (By similarity).</text>
</comment>
<comment type="subunit">
    <text evidence="2">Homodimer; non-covalently linked.</text>
</comment>
<comment type="subcellular location">
    <subcellularLocation>
        <location evidence="2">Secreted</location>
    </subcellularLocation>
</comment>
<comment type="tissue specificity">
    <text>Expressed by the venom gland.</text>
</comment>
<comment type="similarity">
    <text evidence="5">Belongs to the NGF-beta family.</text>
</comment>
<protein>
    <recommendedName>
        <fullName>Venom nerve growth factor</fullName>
        <shortName>v-NGF</shortName>
        <shortName>vNGF</shortName>
    </recommendedName>
</protein>
<sequence>MSMLCYTLIIAFLIGIWAAPKSEDNVPLGSPATSDLSDTSCAKTHEALKTSRNIDQHYPAPKKAEDQEFGSAANIIVDPKLFQKRRFQSPRVLFSTQPPPLSRDEQSVDNANSLNRNIRAKREDHPVHKRGEYSVCDSVNVWVANKTTATDIRGNLVTVMVDVNINNNVYKQYFFETKCRNPNPVPTGCRGIDARHWNSYCTTTNTFVKALTMEGNQASWRFIRIDSACVCVISRKNENFG</sequence>
<organism>
    <name type="scientific">Crotalus durissus terrificus</name>
    <name type="common">South American rattlesnake</name>
    <dbReference type="NCBI Taxonomy" id="8732"/>
    <lineage>
        <taxon>Eukaryota</taxon>
        <taxon>Metazoa</taxon>
        <taxon>Chordata</taxon>
        <taxon>Craniata</taxon>
        <taxon>Vertebrata</taxon>
        <taxon>Euteleostomi</taxon>
        <taxon>Lepidosauria</taxon>
        <taxon>Squamata</taxon>
        <taxon>Bifurcata</taxon>
        <taxon>Unidentata</taxon>
        <taxon>Episquamata</taxon>
        <taxon>Toxicofera</taxon>
        <taxon>Serpentes</taxon>
        <taxon>Colubroidea</taxon>
        <taxon>Viperidae</taxon>
        <taxon>Crotalinae</taxon>
        <taxon>Crotalus</taxon>
    </lineage>
</organism>
<feature type="signal peptide" evidence="4">
    <location>
        <begin position="1"/>
        <end position="18"/>
    </location>
</feature>
<feature type="propeptide" id="PRO_0000043284" evidence="1">
    <location>
        <begin position="19"/>
        <end position="122"/>
    </location>
</feature>
<feature type="chain" id="PRO_0000043285" description="Venom nerve growth factor">
    <location>
        <begin position="123"/>
        <end position="241"/>
    </location>
</feature>
<feature type="glycosylation site" description="N-linked (GlcNAc...) asparagine" evidence="4">
    <location>
        <position position="145"/>
    </location>
</feature>
<feature type="disulfide bond" evidence="2">
    <location>
        <begin position="136"/>
        <end position="201"/>
    </location>
</feature>
<feature type="disulfide bond" evidence="2">
    <location>
        <begin position="179"/>
        <end position="229"/>
    </location>
</feature>
<feature type="disulfide bond" evidence="2">
    <location>
        <begin position="189"/>
        <end position="231"/>
    </location>
</feature>
<reference key="1">
    <citation type="submission" date="2000-09" db="EMBL/GenBank/DDBJ databases">
        <title>Cloning and sequence of a cDNA coding for a rattlesnake (Crotalus durissus terrificus) nerve growth factor.</title>
        <authorList>
            <person name="Hayashi M.A.F."/>
            <person name="Radis-Baptista G."/>
            <person name="Yamane T."/>
            <person name="Camargo A.C.M."/>
        </authorList>
    </citation>
    <scope>NUCLEOTIDE SEQUENCE [MRNA]</scope>
    <source>
        <tissue>Venom gland</tissue>
    </source>
</reference>
<proteinExistence type="evidence at transcript level"/>
<name>NGFV_CRODU</name>
<accession>Q9DEZ9</accession>
<keyword id="KW-0165">Cleavage on pair of basic residues</keyword>
<keyword id="KW-1015">Disulfide bond</keyword>
<keyword id="KW-0325">Glycoprotein</keyword>
<keyword id="KW-0339">Growth factor</keyword>
<keyword id="KW-0446">Lipid-binding</keyword>
<keyword id="KW-0481">Metalloenzyme inhibitor</keyword>
<keyword id="KW-0483">Metalloprotease inhibitor</keyword>
<keyword id="KW-0646">Protease inhibitor</keyword>
<keyword id="KW-0964">Secreted</keyword>
<keyword id="KW-0732">Signal</keyword>
<keyword id="KW-0800">Toxin</keyword>
<evidence type="ECO:0000250" key="1"/>
<evidence type="ECO:0000250" key="2">
    <source>
        <dbReference type="UniProtKB" id="P61898"/>
    </source>
</evidence>
<evidence type="ECO:0000250" key="3">
    <source>
        <dbReference type="UniProtKB" id="P61899"/>
    </source>
</evidence>
<evidence type="ECO:0000255" key="4"/>
<evidence type="ECO:0000305" key="5"/>